<sequence>MKTMTSAEVRQMFLDFFKSKGHTVEPSQSLVPVNDPTLLWINSGVATLKKYFDGSVVPENPRLTNAQKAIRTNDIENVGKTARHHTMFEMLGNFSIGDYFRKEAIAFAWELLTSSEWFEFPAEKLYITYYPADKDTYNRWVEVGVDPTHLVPIEDNFWEIGAGPSGPDTEIFFDRGEVYDPEHVGLKLLAEDIENDRYIEIWNIVLSQFNADPSIPRSEYPELPQKNIDTGMGLERMVCIIQGGKTNFDTDLFLPIIREIEKLSGKTYSPDSENMSFKVIADHIRSLSFAIGDGALPGNEGRGYVLRRLLRRAVMHGKKLGIQGKFLASLVPTVGKIMQSYYPEVLEKEDFIMQIIDREEETFNRTIDAGQKLIDELLLNLKSEGKDRLEGADIFRLYDTYGFPVELTEELAEDEGFKIDHEGFKVAMKAQQERARAAVVKGGSMGAQNETLSSIEVESEFLYEDKTTQGKLLVSIQDDEIVDEVSGKAQLVFDVTPFYAEMGGQVADHGVIKDAEGQVVANVLDVQHAPHGQNLHSVETLSPLKVGESYTLEIDKERRAAVVKNHTATHLLHAALHNIVGNHALQAGSLNEVEFLRFDFTHFAQVTKEELAEIERQVNEVIWQSLKVETVETDIATAKEMGAMALFGEKYGKNVRVVKIGDYSIELCGGTHTQTTSEIGLFKIVKEEGIGSGVRRIIAVTGQKAYEAFKDAENTLNEVATMVKAPQTSQVLAKVTSLQDELKTAQKENDALAGKLAASQSDEIFKNVQTAGSLNFIASEVTVPDANGLRNLADIWKQKELSDVLVLVAKIGEKVSLLVASKSSDVKAGNLVKELAPFVDGRGGGKPDMAMAGGSKAAGIPELLAAVAEKLA</sequence>
<keyword id="KW-0030">Aminoacyl-tRNA synthetase</keyword>
<keyword id="KW-0067">ATP-binding</keyword>
<keyword id="KW-0963">Cytoplasm</keyword>
<keyword id="KW-0436">Ligase</keyword>
<keyword id="KW-0479">Metal-binding</keyword>
<keyword id="KW-0547">Nucleotide-binding</keyword>
<keyword id="KW-0648">Protein biosynthesis</keyword>
<keyword id="KW-1185">Reference proteome</keyword>
<keyword id="KW-0694">RNA-binding</keyword>
<keyword id="KW-0820">tRNA-binding</keyword>
<keyword id="KW-0862">Zinc</keyword>
<comment type="function">
    <text evidence="1">Catalyzes the attachment of alanine to tRNA(Ala) in a two-step reaction: alanine is first activated by ATP to form Ala-AMP and then transferred to the acceptor end of tRNA(Ala). Also edits incorrectly charged Ser-tRNA(Ala) and Gly-tRNA(Ala) via its editing domain.</text>
</comment>
<comment type="catalytic activity">
    <reaction evidence="1">
        <text>tRNA(Ala) + L-alanine + ATP = L-alanyl-tRNA(Ala) + AMP + diphosphate</text>
        <dbReference type="Rhea" id="RHEA:12540"/>
        <dbReference type="Rhea" id="RHEA-COMP:9657"/>
        <dbReference type="Rhea" id="RHEA-COMP:9923"/>
        <dbReference type="ChEBI" id="CHEBI:30616"/>
        <dbReference type="ChEBI" id="CHEBI:33019"/>
        <dbReference type="ChEBI" id="CHEBI:57972"/>
        <dbReference type="ChEBI" id="CHEBI:78442"/>
        <dbReference type="ChEBI" id="CHEBI:78497"/>
        <dbReference type="ChEBI" id="CHEBI:456215"/>
        <dbReference type="EC" id="6.1.1.7"/>
    </reaction>
</comment>
<comment type="cofactor">
    <cofactor evidence="1">
        <name>Zn(2+)</name>
        <dbReference type="ChEBI" id="CHEBI:29105"/>
    </cofactor>
    <text evidence="1">Binds 1 zinc ion per subunit.</text>
</comment>
<comment type="subcellular location">
    <subcellularLocation>
        <location evidence="1">Cytoplasm</location>
    </subcellularLocation>
</comment>
<comment type="domain">
    <text evidence="1">Consists of three domains; the N-terminal catalytic domain, the editing domain and the C-terminal C-Ala domain. The editing domain removes incorrectly charged amino acids, while the C-Ala domain, along with tRNA(Ala), serves as a bridge to cooperatively bring together the editing and aminoacylation centers thus stimulating deacylation of misacylated tRNAs.</text>
</comment>
<comment type="similarity">
    <text evidence="1">Belongs to the class-II aminoacyl-tRNA synthetase family.</text>
</comment>
<accession>Q9CEW0</accession>
<feature type="chain" id="PRO_0000075131" description="Alanine--tRNA ligase">
    <location>
        <begin position="1"/>
        <end position="872"/>
    </location>
</feature>
<feature type="binding site" evidence="1">
    <location>
        <position position="566"/>
    </location>
    <ligand>
        <name>Zn(2+)</name>
        <dbReference type="ChEBI" id="CHEBI:29105"/>
    </ligand>
</feature>
<feature type="binding site" evidence="1">
    <location>
        <position position="570"/>
    </location>
    <ligand>
        <name>Zn(2+)</name>
        <dbReference type="ChEBI" id="CHEBI:29105"/>
    </ligand>
</feature>
<feature type="binding site" evidence="1">
    <location>
        <position position="668"/>
    </location>
    <ligand>
        <name>Zn(2+)</name>
        <dbReference type="ChEBI" id="CHEBI:29105"/>
    </ligand>
</feature>
<feature type="binding site" evidence="1">
    <location>
        <position position="672"/>
    </location>
    <ligand>
        <name>Zn(2+)</name>
        <dbReference type="ChEBI" id="CHEBI:29105"/>
    </ligand>
</feature>
<organism>
    <name type="scientific">Lactococcus lactis subsp. lactis (strain IL1403)</name>
    <name type="common">Streptococcus lactis</name>
    <dbReference type="NCBI Taxonomy" id="272623"/>
    <lineage>
        <taxon>Bacteria</taxon>
        <taxon>Bacillati</taxon>
        <taxon>Bacillota</taxon>
        <taxon>Bacilli</taxon>
        <taxon>Lactobacillales</taxon>
        <taxon>Streptococcaceae</taxon>
        <taxon>Lactococcus</taxon>
    </lineage>
</organism>
<dbReference type="EC" id="6.1.1.7" evidence="1"/>
<dbReference type="EMBL" id="AE005176">
    <property type="protein sequence ID" value="AAK05822.1"/>
    <property type="molecule type" value="Genomic_DNA"/>
</dbReference>
<dbReference type="PIR" id="D86840">
    <property type="entry name" value="D86840"/>
</dbReference>
<dbReference type="RefSeq" id="NP_267880.1">
    <property type="nucleotide sequence ID" value="NC_002662.1"/>
</dbReference>
<dbReference type="RefSeq" id="WP_003130876.1">
    <property type="nucleotide sequence ID" value="NC_002662.1"/>
</dbReference>
<dbReference type="SMR" id="Q9CEW0"/>
<dbReference type="PaxDb" id="272623-L0343"/>
<dbReference type="EnsemblBacteria" id="AAK05822">
    <property type="protein sequence ID" value="AAK05822"/>
    <property type="gene ID" value="L0343"/>
</dbReference>
<dbReference type="KEGG" id="lla:L0343"/>
<dbReference type="PATRIC" id="fig|272623.7.peg.1849"/>
<dbReference type="eggNOG" id="COG0013">
    <property type="taxonomic scope" value="Bacteria"/>
</dbReference>
<dbReference type="HOGENOM" id="CLU_004485_1_1_9"/>
<dbReference type="OrthoDB" id="9803884at2"/>
<dbReference type="Proteomes" id="UP000002196">
    <property type="component" value="Chromosome"/>
</dbReference>
<dbReference type="GO" id="GO:0005829">
    <property type="term" value="C:cytosol"/>
    <property type="evidence" value="ECO:0007669"/>
    <property type="project" value="TreeGrafter"/>
</dbReference>
<dbReference type="GO" id="GO:0004813">
    <property type="term" value="F:alanine-tRNA ligase activity"/>
    <property type="evidence" value="ECO:0007669"/>
    <property type="project" value="UniProtKB-UniRule"/>
</dbReference>
<dbReference type="GO" id="GO:0002161">
    <property type="term" value="F:aminoacyl-tRNA deacylase activity"/>
    <property type="evidence" value="ECO:0007669"/>
    <property type="project" value="TreeGrafter"/>
</dbReference>
<dbReference type="GO" id="GO:0005524">
    <property type="term" value="F:ATP binding"/>
    <property type="evidence" value="ECO:0007669"/>
    <property type="project" value="UniProtKB-UniRule"/>
</dbReference>
<dbReference type="GO" id="GO:0140096">
    <property type="term" value="F:catalytic activity, acting on a protein"/>
    <property type="evidence" value="ECO:0007669"/>
    <property type="project" value="UniProtKB-ARBA"/>
</dbReference>
<dbReference type="GO" id="GO:0016740">
    <property type="term" value="F:transferase activity"/>
    <property type="evidence" value="ECO:0007669"/>
    <property type="project" value="UniProtKB-ARBA"/>
</dbReference>
<dbReference type="GO" id="GO:0000049">
    <property type="term" value="F:tRNA binding"/>
    <property type="evidence" value="ECO:0007669"/>
    <property type="project" value="UniProtKB-KW"/>
</dbReference>
<dbReference type="GO" id="GO:0008270">
    <property type="term" value="F:zinc ion binding"/>
    <property type="evidence" value="ECO:0007669"/>
    <property type="project" value="UniProtKB-UniRule"/>
</dbReference>
<dbReference type="GO" id="GO:0006419">
    <property type="term" value="P:alanyl-tRNA aminoacylation"/>
    <property type="evidence" value="ECO:0007669"/>
    <property type="project" value="UniProtKB-UniRule"/>
</dbReference>
<dbReference type="CDD" id="cd00673">
    <property type="entry name" value="AlaRS_core"/>
    <property type="match status" value="1"/>
</dbReference>
<dbReference type="FunFam" id="3.10.310.40:FF:000001">
    <property type="entry name" value="Alanine--tRNA ligase"/>
    <property type="match status" value="1"/>
</dbReference>
<dbReference type="FunFam" id="3.30.54.20:FF:000001">
    <property type="entry name" value="Alanine--tRNA ligase"/>
    <property type="match status" value="1"/>
</dbReference>
<dbReference type="FunFam" id="3.30.930.10:FF:000046">
    <property type="entry name" value="Alanine--tRNA ligase"/>
    <property type="match status" value="1"/>
</dbReference>
<dbReference type="FunFam" id="3.30.980.10:FF:000004">
    <property type="entry name" value="Alanine--tRNA ligase, cytoplasmic"/>
    <property type="match status" value="1"/>
</dbReference>
<dbReference type="Gene3D" id="2.40.30.130">
    <property type="match status" value="1"/>
</dbReference>
<dbReference type="Gene3D" id="3.10.310.40">
    <property type="match status" value="1"/>
</dbReference>
<dbReference type="Gene3D" id="3.30.54.20">
    <property type="match status" value="1"/>
</dbReference>
<dbReference type="Gene3D" id="6.10.250.550">
    <property type="match status" value="1"/>
</dbReference>
<dbReference type="Gene3D" id="3.30.930.10">
    <property type="entry name" value="Bira Bifunctional Protein, Domain 2"/>
    <property type="match status" value="1"/>
</dbReference>
<dbReference type="Gene3D" id="3.30.980.10">
    <property type="entry name" value="Threonyl-trna Synthetase, Chain A, domain 2"/>
    <property type="match status" value="1"/>
</dbReference>
<dbReference type="HAMAP" id="MF_00036_B">
    <property type="entry name" value="Ala_tRNA_synth_B"/>
    <property type="match status" value="1"/>
</dbReference>
<dbReference type="InterPro" id="IPR006195">
    <property type="entry name" value="aa-tRNA-synth_II"/>
</dbReference>
<dbReference type="InterPro" id="IPR045864">
    <property type="entry name" value="aa-tRNA-synth_II/BPL/LPL"/>
</dbReference>
<dbReference type="InterPro" id="IPR002318">
    <property type="entry name" value="Ala-tRNA-lgiase_IIc"/>
</dbReference>
<dbReference type="InterPro" id="IPR018162">
    <property type="entry name" value="Ala-tRNA-ligase_IIc_anticod-bd"/>
</dbReference>
<dbReference type="InterPro" id="IPR018165">
    <property type="entry name" value="Ala-tRNA-synth_IIc_core"/>
</dbReference>
<dbReference type="InterPro" id="IPR018164">
    <property type="entry name" value="Ala-tRNA-synth_IIc_N"/>
</dbReference>
<dbReference type="InterPro" id="IPR050058">
    <property type="entry name" value="Ala-tRNA_ligase"/>
</dbReference>
<dbReference type="InterPro" id="IPR023033">
    <property type="entry name" value="Ala_tRNA_ligase_euk/bac"/>
</dbReference>
<dbReference type="InterPro" id="IPR003156">
    <property type="entry name" value="DHHA1_dom"/>
</dbReference>
<dbReference type="InterPro" id="IPR018163">
    <property type="entry name" value="Thr/Ala-tRNA-synth_IIc_edit"/>
</dbReference>
<dbReference type="InterPro" id="IPR009000">
    <property type="entry name" value="Transl_B-barrel_sf"/>
</dbReference>
<dbReference type="InterPro" id="IPR012947">
    <property type="entry name" value="tRNA_SAD"/>
</dbReference>
<dbReference type="NCBIfam" id="TIGR00344">
    <property type="entry name" value="alaS"/>
    <property type="match status" value="1"/>
</dbReference>
<dbReference type="PANTHER" id="PTHR11777:SF9">
    <property type="entry name" value="ALANINE--TRNA LIGASE, CYTOPLASMIC"/>
    <property type="match status" value="1"/>
</dbReference>
<dbReference type="PANTHER" id="PTHR11777">
    <property type="entry name" value="ALANYL-TRNA SYNTHETASE"/>
    <property type="match status" value="1"/>
</dbReference>
<dbReference type="Pfam" id="PF02272">
    <property type="entry name" value="DHHA1"/>
    <property type="match status" value="1"/>
</dbReference>
<dbReference type="Pfam" id="PF01411">
    <property type="entry name" value="tRNA-synt_2c"/>
    <property type="match status" value="1"/>
</dbReference>
<dbReference type="Pfam" id="PF07973">
    <property type="entry name" value="tRNA_SAD"/>
    <property type="match status" value="1"/>
</dbReference>
<dbReference type="PRINTS" id="PR00980">
    <property type="entry name" value="TRNASYNTHALA"/>
</dbReference>
<dbReference type="SMART" id="SM00863">
    <property type="entry name" value="tRNA_SAD"/>
    <property type="match status" value="1"/>
</dbReference>
<dbReference type="SUPFAM" id="SSF55681">
    <property type="entry name" value="Class II aaRS and biotin synthetases"/>
    <property type="match status" value="1"/>
</dbReference>
<dbReference type="SUPFAM" id="SSF101353">
    <property type="entry name" value="Putative anticodon-binding domain of alanyl-tRNA synthetase (AlaRS)"/>
    <property type="match status" value="1"/>
</dbReference>
<dbReference type="SUPFAM" id="SSF55186">
    <property type="entry name" value="ThrRS/AlaRS common domain"/>
    <property type="match status" value="1"/>
</dbReference>
<dbReference type="SUPFAM" id="SSF50447">
    <property type="entry name" value="Translation proteins"/>
    <property type="match status" value="1"/>
</dbReference>
<dbReference type="PROSITE" id="PS50860">
    <property type="entry name" value="AA_TRNA_LIGASE_II_ALA"/>
    <property type="match status" value="1"/>
</dbReference>
<name>SYA_LACLA</name>
<protein>
    <recommendedName>
        <fullName evidence="1">Alanine--tRNA ligase</fullName>
        <ecNumber evidence="1">6.1.1.7</ecNumber>
    </recommendedName>
    <alternativeName>
        <fullName evidence="1">Alanyl-tRNA synthetase</fullName>
        <shortName evidence="1">AlaRS</shortName>
    </alternativeName>
</protein>
<proteinExistence type="inferred from homology"/>
<evidence type="ECO:0000255" key="1">
    <source>
        <dbReference type="HAMAP-Rule" id="MF_00036"/>
    </source>
</evidence>
<reference key="1">
    <citation type="journal article" date="2001" name="Genome Res.">
        <title>The complete genome sequence of the lactic acid bacterium Lactococcus lactis ssp. lactis IL1403.</title>
        <authorList>
            <person name="Bolotin A."/>
            <person name="Wincker P."/>
            <person name="Mauger S."/>
            <person name="Jaillon O."/>
            <person name="Malarme K."/>
            <person name="Weissenbach J."/>
            <person name="Ehrlich S.D."/>
            <person name="Sorokin A."/>
        </authorList>
    </citation>
    <scope>NUCLEOTIDE SEQUENCE [LARGE SCALE GENOMIC DNA]</scope>
    <source>
        <strain>IL1403</strain>
    </source>
</reference>
<gene>
    <name evidence="1" type="primary">alaS</name>
    <name type="ordered locus">LL1724</name>
    <name type="ORF">L0343</name>
</gene>